<dbReference type="EC" id="3.6.5.-" evidence="1"/>
<dbReference type="EMBL" id="CP000260">
    <property type="protein sequence ID" value="ABF34209.1"/>
    <property type="molecule type" value="Genomic_DNA"/>
</dbReference>
<dbReference type="SMR" id="Q1JGD5"/>
<dbReference type="KEGG" id="sph:MGAS10270_Spy1144"/>
<dbReference type="HOGENOM" id="CLU_011747_2_1_9"/>
<dbReference type="Proteomes" id="UP000002436">
    <property type="component" value="Chromosome"/>
</dbReference>
<dbReference type="GO" id="GO:0005737">
    <property type="term" value="C:cytoplasm"/>
    <property type="evidence" value="ECO:0007669"/>
    <property type="project" value="UniProtKB-SubCell"/>
</dbReference>
<dbReference type="GO" id="GO:0005525">
    <property type="term" value="F:GTP binding"/>
    <property type="evidence" value="ECO:0007669"/>
    <property type="project" value="UniProtKB-UniRule"/>
</dbReference>
<dbReference type="GO" id="GO:0003924">
    <property type="term" value="F:GTPase activity"/>
    <property type="evidence" value="ECO:0007669"/>
    <property type="project" value="UniProtKB-UniRule"/>
</dbReference>
<dbReference type="GO" id="GO:0000287">
    <property type="term" value="F:magnesium ion binding"/>
    <property type="evidence" value="ECO:0007669"/>
    <property type="project" value="InterPro"/>
</dbReference>
<dbReference type="GO" id="GO:0042254">
    <property type="term" value="P:ribosome biogenesis"/>
    <property type="evidence" value="ECO:0007669"/>
    <property type="project" value="UniProtKB-UniRule"/>
</dbReference>
<dbReference type="CDD" id="cd01898">
    <property type="entry name" value="Obg"/>
    <property type="match status" value="1"/>
</dbReference>
<dbReference type="FunFam" id="2.70.210.12:FF:000001">
    <property type="entry name" value="GTPase Obg"/>
    <property type="match status" value="1"/>
</dbReference>
<dbReference type="FunFam" id="3.40.50.300:FF:000515">
    <property type="entry name" value="GTPase Obg"/>
    <property type="match status" value="1"/>
</dbReference>
<dbReference type="Gene3D" id="3.30.300.350">
    <property type="entry name" value="GTP-binding protein OBG, C-terminal domain"/>
    <property type="match status" value="1"/>
</dbReference>
<dbReference type="Gene3D" id="2.70.210.12">
    <property type="entry name" value="GTP1/OBG domain"/>
    <property type="match status" value="1"/>
</dbReference>
<dbReference type="Gene3D" id="3.40.50.300">
    <property type="entry name" value="P-loop containing nucleotide triphosphate hydrolases"/>
    <property type="match status" value="1"/>
</dbReference>
<dbReference type="HAMAP" id="MF_01454">
    <property type="entry name" value="GTPase_Obg"/>
    <property type="match status" value="1"/>
</dbReference>
<dbReference type="InterPro" id="IPR031167">
    <property type="entry name" value="G_OBG"/>
</dbReference>
<dbReference type="InterPro" id="IPR006073">
    <property type="entry name" value="GTP-bd"/>
</dbReference>
<dbReference type="InterPro" id="IPR014100">
    <property type="entry name" value="GTP-bd_Obg/CgtA"/>
</dbReference>
<dbReference type="InterPro" id="IPR036346">
    <property type="entry name" value="GTP-bd_prot_GTP1/OBG_C_sf"/>
</dbReference>
<dbReference type="InterPro" id="IPR006074">
    <property type="entry name" value="GTP1-OBG_CS"/>
</dbReference>
<dbReference type="InterPro" id="IPR006169">
    <property type="entry name" value="GTP1_OBG_dom"/>
</dbReference>
<dbReference type="InterPro" id="IPR036726">
    <property type="entry name" value="GTP1_OBG_dom_sf"/>
</dbReference>
<dbReference type="InterPro" id="IPR045086">
    <property type="entry name" value="OBG_GTPase"/>
</dbReference>
<dbReference type="InterPro" id="IPR015349">
    <property type="entry name" value="OCT_dom"/>
</dbReference>
<dbReference type="InterPro" id="IPR027417">
    <property type="entry name" value="P-loop_NTPase"/>
</dbReference>
<dbReference type="InterPro" id="IPR005225">
    <property type="entry name" value="Small_GTP-bd"/>
</dbReference>
<dbReference type="NCBIfam" id="TIGR02729">
    <property type="entry name" value="Obg_CgtA"/>
    <property type="match status" value="1"/>
</dbReference>
<dbReference type="NCBIfam" id="TIGR03595">
    <property type="entry name" value="Obg_CgtA_exten"/>
    <property type="match status" value="1"/>
</dbReference>
<dbReference type="NCBIfam" id="NF008954">
    <property type="entry name" value="PRK12296.1"/>
    <property type="match status" value="1"/>
</dbReference>
<dbReference type="NCBIfam" id="NF008955">
    <property type="entry name" value="PRK12297.1"/>
    <property type="match status" value="1"/>
</dbReference>
<dbReference type="NCBIfam" id="NF008956">
    <property type="entry name" value="PRK12299.1"/>
    <property type="match status" value="1"/>
</dbReference>
<dbReference type="NCBIfam" id="TIGR00231">
    <property type="entry name" value="small_GTP"/>
    <property type="match status" value="1"/>
</dbReference>
<dbReference type="PANTHER" id="PTHR11702">
    <property type="entry name" value="DEVELOPMENTALLY REGULATED GTP-BINDING PROTEIN-RELATED"/>
    <property type="match status" value="1"/>
</dbReference>
<dbReference type="PANTHER" id="PTHR11702:SF31">
    <property type="entry name" value="MITOCHONDRIAL RIBOSOME-ASSOCIATED GTPASE 2"/>
    <property type="match status" value="1"/>
</dbReference>
<dbReference type="Pfam" id="PF09269">
    <property type="entry name" value="DUF1967"/>
    <property type="match status" value="1"/>
</dbReference>
<dbReference type="Pfam" id="PF01018">
    <property type="entry name" value="GTP1_OBG"/>
    <property type="match status" value="1"/>
</dbReference>
<dbReference type="Pfam" id="PF01926">
    <property type="entry name" value="MMR_HSR1"/>
    <property type="match status" value="1"/>
</dbReference>
<dbReference type="PIRSF" id="PIRSF002401">
    <property type="entry name" value="GTP_bd_Obg/CgtA"/>
    <property type="match status" value="1"/>
</dbReference>
<dbReference type="PRINTS" id="PR00326">
    <property type="entry name" value="GTP1OBG"/>
</dbReference>
<dbReference type="SUPFAM" id="SSF102741">
    <property type="entry name" value="Obg GTP-binding protein C-terminal domain"/>
    <property type="match status" value="1"/>
</dbReference>
<dbReference type="SUPFAM" id="SSF82051">
    <property type="entry name" value="Obg GTP-binding protein N-terminal domain"/>
    <property type="match status" value="1"/>
</dbReference>
<dbReference type="SUPFAM" id="SSF52540">
    <property type="entry name" value="P-loop containing nucleoside triphosphate hydrolases"/>
    <property type="match status" value="1"/>
</dbReference>
<dbReference type="PROSITE" id="PS51710">
    <property type="entry name" value="G_OBG"/>
    <property type="match status" value="1"/>
</dbReference>
<dbReference type="PROSITE" id="PS00905">
    <property type="entry name" value="GTP1_OBG"/>
    <property type="match status" value="1"/>
</dbReference>
<dbReference type="PROSITE" id="PS51883">
    <property type="entry name" value="OBG"/>
    <property type="match status" value="1"/>
</dbReference>
<dbReference type="PROSITE" id="PS51881">
    <property type="entry name" value="OCT"/>
    <property type="match status" value="1"/>
</dbReference>
<sequence>MSMFLDTAKISVQAGRGGDGMVAFRREKYVPNGGPWGGDGGKGGSVIFRVDEGLRTLMDFRYNRKFKAKSGEKGMTKGMHGRGAEDLIVFVPQGTTVRDAETGKVIIDLVEHGQEVVIAKGGRGGRGNIRFATPRNPAPEIAENGEPGEERQLELELKILADVGLVGFPSVGKSTLLSVVSSAKPKIGAYHFTTIVPNLGMVRTKSGDSFAMADLPGLIEGASQGVGLGTQFLRHIERTRVILHVIDMSASEGRDPYEDYVSINNELETYNLRLMERPQIIVANKMDMPEAQENLKAFKKKLAAQYDEFDDLPMIFPISSLAHQGLENLLEATAELLAKTDEFLLYDESDLVDEEAYYGFAKTEKDFEITRDDDATWVLSGEKLERLFVMTNMERDESIMKFARQLRGMGVDEALRERGAKDGDPVRIGKFEFEFVD</sequence>
<protein>
    <recommendedName>
        <fullName evidence="1">GTPase Obg</fullName>
        <ecNumber evidence="1">3.6.5.-</ecNumber>
    </recommendedName>
    <alternativeName>
        <fullName evidence="1">GTP-binding protein Obg</fullName>
    </alternativeName>
</protein>
<name>OBG_STRPD</name>
<proteinExistence type="inferred from homology"/>
<accession>Q1JGD5</accession>
<keyword id="KW-0963">Cytoplasm</keyword>
<keyword id="KW-0342">GTP-binding</keyword>
<keyword id="KW-0378">Hydrolase</keyword>
<keyword id="KW-0460">Magnesium</keyword>
<keyword id="KW-0479">Metal-binding</keyword>
<keyword id="KW-0547">Nucleotide-binding</keyword>
<organism>
    <name type="scientific">Streptococcus pyogenes serotype M2 (strain MGAS10270)</name>
    <dbReference type="NCBI Taxonomy" id="370552"/>
    <lineage>
        <taxon>Bacteria</taxon>
        <taxon>Bacillati</taxon>
        <taxon>Bacillota</taxon>
        <taxon>Bacilli</taxon>
        <taxon>Lactobacillales</taxon>
        <taxon>Streptococcaceae</taxon>
        <taxon>Streptococcus</taxon>
    </lineage>
</organism>
<gene>
    <name evidence="1" type="primary">obg</name>
    <name type="ordered locus">MGAS10270_Spy1144</name>
</gene>
<comment type="function">
    <text evidence="1">An essential GTPase which binds GTP, GDP and possibly (p)ppGpp with moderate affinity, with high nucleotide exchange rates and a fairly low GTP hydrolysis rate. Plays a role in control of the cell cycle, stress response, ribosome biogenesis and in those bacteria that undergo differentiation, in morphogenesis control.</text>
</comment>
<comment type="cofactor">
    <cofactor evidence="1">
        <name>Mg(2+)</name>
        <dbReference type="ChEBI" id="CHEBI:18420"/>
    </cofactor>
</comment>
<comment type="subunit">
    <text evidence="1">Monomer.</text>
</comment>
<comment type="subcellular location">
    <subcellularLocation>
        <location evidence="1">Cytoplasm</location>
    </subcellularLocation>
</comment>
<comment type="similarity">
    <text evidence="1">Belongs to the TRAFAC class OBG-HflX-like GTPase superfamily. OBG GTPase family.</text>
</comment>
<reference key="1">
    <citation type="journal article" date="2006" name="Proc. Natl. Acad. Sci. U.S.A.">
        <title>Molecular genetic anatomy of inter- and intraserotype variation in the human bacterial pathogen group A Streptococcus.</title>
        <authorList>
            <person name="Beres S.B."/>
            <person name="Richter E.W."/>
            <person name="Nagiec M.J."/>
            <person name="Sumby P."/>
            <person name="Porcella S.F."/>
            <person name="DeLeo F.R."/>
            <person name="Musser J.M."/>
        </authorList>
    </citation>
    <scope>NUCLEOTIDE SEQUENCE [LARGE SCALE GENOMIC DNA]</scope>
    <source>
        <strain>MGAS10270</strain>
    </source>
</reference>
<feature type="chain" id="PRO_0000386308" description="GTPase Obg">
    <location>
        <begin position="1"/>
        <end position="437"/>
    </location>
</feature>
<feature type="domain" description="Obg" evidence="3">
    <location>
        <begin position="2"/>
        <end position="160"/>
    </location>
</feature>
<feature type="domain" description="OBG-type G" evidence="1">
    <location>
        <begin position="161"/>
        <end position="338"/>
    </location>
</feature>
<feature type="domain" description="OCT" evidence="2">
    <location>
        <begin position="359"/>
        <end position="437"/>
    </location>
</feature>
<feature type="binding site" evidence="1">
    <location>
        <begin position="167"/>
        <end position="174"/>
    </location>
    <ligand>
        <name>GTP</name>
        <dbReference type="ChEBI" id="CHEBI:37565"/>
    </ligand>
</feature>
<feature type="binding site" evidence="1">
    <location>
        <position position="174"/>
    </location>
    <ligand>
        <name>Mg(2+)</name>
        <dbReference type="ChEBI" id="CHEBI:18420"/>
    </ligand>
</feature>
<feature type="binding site" evidence="1">
    <location>
        <begin position="192"/>
        <end position="196"/>
    </location>
    <ligand>
        <name>GTP</name>
        <dbReference type="ChEBI" id="CHEBI:37565"/>
    </ligand>
</feature>
<feature type="binding site" evidence="1">
    <location>
        <position position="194"/>
    </location>
    <ligand>
        <name>Mg(2+)</name>
        <dbReference type="ChEBI" id="CHEBI:18420"/>
    </ligand>
</feature>
<feature type="binding site" evidence="1">
    <location>
        <begin position="214"/>
        <end position="217"/>
    </location>
    <ligand>
        <name>GTP</name>
        <dbReference type="ChEBI" id="CHEBI:37565"/>
    </ligand>
</feature>
<feature type="binding site" evidence="1">
    <location>
        <begin position="284"/>
        <end position="287"/>
    </location>
    <ligand>
        <name>GTP</name>
        <dbReference type="ChEBI" id="CHEBI:37565"/>
    </ligand>
</feature>
<feature type="binding site" evidence="1">
    <location>
        <begin position="319"/>
        <end position="321"/>
    </location>
    <ligand>
        <name>GTP</name>
        <dbReference type="ChEBI" id="CHEBI:37565"/>
    </ligand>
</feature>
<evidence type="ECO:0000255" key="1">
    <source>
        <dbReference type="HAMAP-Rule" id="MF_01454"/>
    </source>
</evidence>
<evidence type="ECO:0000255" key="2">
    <source>
        <dbReference type="PROSITE-ProRule" id="PRU01229"/>
    </source>
</evidence>
<evidence type="ECO:0000255" key="3">
    <source>
        <dbReference type="PROSITE-ProRule" id="PRU01231"/>
    </source>
</evidence>